<protein>
    <recommendedName>
        <fullName>Glycoprotein hormones alpha chain</fullName>
    </recommendedName>
    <alternativeName>
        <fullName>Anterior pituitary glycoprotein hormones common subunit alpha</fullName>
    </alternativeName>
    <alternativeName>
        <fullName>Choriogonadotropin alpha chain</fullName>
    </alternativeName>
    <alternativeName>
        <fullName>Chorionic gonadotrophin subunit alpha</fullName>
        <shortName>CG-alpha</shortName>
    </alternativeName>
    <alternativeName>
        <fullName>Follicle-stimulating hormone alpha chain</fullName>
        <shortName>FSH-alpha</shortName>
    </alternativeName>
    <alternativeName>
        <fullName>Follitropin alpha chain</fullName>
    </alternativeName>
    <alternativeName>
        <fullName>Luteinizing hormone alpha chain</fullName>
        <shortName>LSH-alpha</shortName>
    </alternativeName>
    <alternativeName>
        <fullName>Lutropin alpha chain</fullName>
    </alternativeName>
    <alternativeName>
        <fullName>Thyroid-stimulating hormone alpha chain</fullName>
        <shortName>TSH-alpha</shortName>
    </alternativeName>
    <alternativeName>
        <fullName>Thyrotropin alpha chain</fullName>
    </alternativeName>
</protein>
<comment type="function">
    <text evidence="2">Shared alpha chain of the active heterodimeric glycoprotein hormones thyrotropin/thyroid stimulating hormone/TSH, lutropin/luteinizing hormone/LH, follitropin/follicle stimulating hormone/FSH and choriogonadotropin/CG. These hormones bind specific receptors on target cells that in turn activate downstream signaling pathways.</text>
</comment>
<comment type="subunit">
    <text evidence="2">Heterodimer. The active hormones thyrotropin, lutropin, follitropin and choriogonadotropin are heterodimers composed of CGA, a common alpha chain described here and a unique beta chain which confers their biological specificity to the hormones: TSHB for thyrotropin, LHB for lutropin, FSHB for follitropin and choriogonadotropin subunit beta/CGB for choriogonadotropin.</text>
</comment>
<comment type="subcellular location">
    <subcellularLocation>
        <location evidence="2">Secreted</location>
    </subcellularLocation>
</comment>
<comment type="similarity">
    <text evidence="3">Belongs to the glycoprotein hormones subunit alpha family.</text>
</comment>
<name>GLHA_AOTNA</name>
<accession>Q3HRV5</accession>
<sequence>MDSYRKYAAVILVTLLVFLHSLHSVPDGDFTAQECPECKLKENKYFSKLGAPVYQCAGCCFSRAYPTPVRSQKTMSVPKNVTSESSCCVAKTYTKATVMGNIKVENHTECHCSTCYHHKF</sequence>
<keyword id="KW-1015">Disulfide bond</keyword>
<keyword id="KW-0325">Glycoprotein</keyword>
<keyword id="KW-0372">Hormone</keyword>
<keyword id="KW-1185">Reference proteome</keyword>
<keyword id="KW-0964">Secreted</keyword>
<keyword id="KW-0732">Signal</keyword>
<gene>
    <name type="primary">CGA</name>
</gene>
<organism>
    <name type="scientific">Aotus nancymaae</name>
    <name type="common">Ma's night monkey</name>
    <dbReference type="NCBI Taxonomy" id="37293"/>
    <lineage>
        <taxon>Eukaryota</taxon>
        <taxon>Metazoa</taxon>
        <taxon>Chordata</taxon>
        <taxon>Craniata</taxon>
        <taxon>Vertebrata</taxon>
        <taxon>Euteleostomi</taxon>
        <taxon>Mammalia</taxon>
        <taxon>Eutheria</taxon>
        <taxon>Euarchontoglires</taxon>
        <taxon>Primates</taxon>
        <taxon>Haplorrhini</taxon>
        <taxon>Platyrrhini</taxon>
        <taxon>Aotidae</taxon>
        <taxon>Aotus</taxon>
    </lineage>
</organism>
<feature type="signal peptide" evidence="1">
    <location>
        <begin position="1"/>
        <end position="24"/>
    </location>
</feature>
<feature type="chain" id="PRO_0000233100" description="Glycoprotein hormones alpha chain">
    <location>
        <begin position="25"/>
        <end position="120"/>
    </location>
</feature>
<feature type="glycosylation site" description="N-linked (GlcNAc...) asparagine" evidence="2">
    <location>
        <position position="80"/>
    </location>
</feature>
<feature type="glycosylation site" description="N-linked (GlcNAc...) asparagine" evidence="2">
    <location>
        <position position="106"/>
    </location>
</feature>
<feature type="disulfide bond" evidence="2">
    <location>
        <begin position="35"/>
        <end position="59"/>
    </location>
</feature>
<feature type="disulfide bond" evidence="2">
    <location>
        <begin position="38"/>
        <end position="88"/>
    </location>
</feature>
<feature type="disulfide bond" evidence="2">
    <location>
        <begin position="56"/>
        <end position="110"/>
    </location>
</feature>
<feature type="disulfide bond" evidence="2">
    <location>
        <begin position="60"/>
        <end position="112"/>
    </location>
</feature>
<feature type="disulfide bond" evidence="2">
    <location>
        <begin position="87"/>
        <end position="115"/>
    </location>
</feature>
<proteinExistence type="evidence at transcript level"/>
<evidence type="ECO:0000250" key="1"/>
<evidence type="ECO:0000250" key="2">
    <source>
        <dbReference type="UniProtKB" id="P01215"/>
    </source>
</evidence>
<evidence type="ECO:0000305" key="3"/>
<reference key="1">
    <citation type="journal article" date="2008" name="Gen. Comp. Endocrinol.">
        <title>Molecular cloning of pituitary glycoprotein alpha-subunit and follicle stimulating hormone and chorionic gonadotropin beta-subunits from New World squirrel monkey and owl monkey.</title>
        <authorList>
            <person name="Scammell J.G."/>
            <person name="Funkhouser J.D."/>
            <person name="Moyer F.S."/>
            <person name="Gibson S.V."/>
            <person name="Willis D.L."/>
        </authorList>
    </citation>
    <scope>NUCLEOTIDE SEQUENCE [MRNA]</scope>
</reference>
<dbReference type="EMBL" id="DQ200806">
    <property type="protein sequence ID" value="ABA54985.1"/>
    <property type="molecule type" value="mRNA"/>
</dbReference>
<dbReference type="RefSeq" id="NP_001295453.1">
    <property type="nucleotide sequence ID" value="NM_001308524.1"/>
</dbReference>
<dbReference type="RefSeq" id="XP_012299700.1">
    <property type="nucleotide sequence ID" value="XM_012444277.2"/>
</dbReference>
<dbReference type="RefSeq" id="XP_012299701.1">
    <property type="nucleotide sequence ID" value="XM_012444278.2"/>
</dbReference>
<dbReference type="SMR" id="Q3HRV5"/>
<dbReference type="STRING" id="37293.ENSANAP00000015108"/>
<dbReference type="GlyCosmos" id="Q3HRV5">
    <property type="glycosylation" value="2 sites, No reported glycans"/>
</dbReference>
<dbReference type="Ensembl" id="ENSANAT00000032945.1">
    <property type="protein sequence ID" value="ENSANAP00000015108.1"/>
    <property type="gene ID" value="ENSANAG00000025451.1"/>
</dbReference>
<dbReference type="GeneID" id="105711484"/>
<dbReference type="KEGG" id="anan:105711484"/>
<dbReference type="CTD" id="1081"/>
<dbReference type="GeneTree" id="ENSGT00390000012242"/>
<dbReference type="OMA" id="VKNHTDC"/>
<dbReference type="OrthoDB" id="9852859at2759"/>
<dbReference type="Proteomes" id="UP000233020">
    <property type="component" value="Unplaced"/>
</dbReference>
<dbReference type="GO" id="GO:0005615">
    <property type="term" value="C:extracellular space"/>
    <property type="evidence" value="ECO:0000250"/>
    <property type="project" value="UniProtKB"/>
</dbReference>
<dbReference type="GO" id="GO:0016914">
    <property type="term" value="C:follicle-stimulating hormone complex"/>
    <property type="evidence" value="ECO:0000250"/>
    <property type="project" value="UniProtKB"/>
</dbReference>
<dbReference type="GO" id="GO:0016913">
    <property type="term" value="F:follicle-stimulating hormone activity"/>
    <property type="evidence" value="ECO:0000250"/>
    <property type="project" value="UniProtKB"/>
</dbReference>
<dbReference type="GO" id="GO:0007186">
    <property type="term" value="P:G protein-coupled receptor signaling pathway"/>
    <property type="evidence" value="ECO:0000250"/>
    <property type="project" value="UniProtKB"/>
</dbReference>
<dbReference type="GO" id="GO:0010893">
    <property type="term" value="P:positive regulation of steroid biosynthetic process"/>
    <property type="evidence" value="ECO:0000250"/>
    <property type="project" value="UniProtKB"/>
</dbReference>
<dbReference type="GO" id="GO:0010469">
    <property type="term" value="P:regulation of signaling receptor activity"/>
    <property type="evidence" value="ECO:0000250"/>
    <property type="project" value="UniProtKB"/>
</dbReference>
<dbReference type="GO" id="GO:0006590">
    <property type="term" value="P:thyroid hormone generation"/>
    <property type="evidence" value="ECO:0007669"/>
    <property type="project" value="TreeGrafter"/>
</dbReference>
<dbReference type="FunFam" id="2.10.90.10:FF:000011">
    <property type="entry name" value="Glycoprotein hormones alpha chain"/>
    <property type="match status" value="1"/>
</dbReference>
<dbReference type="Gene3D" id="2.10.90.10">
    <property type="entry name" value="Cystine-knot cytokines"/>
    <property type="match status" value="1"/>
</dbReference>
<dbReference type="InterPro" id="IPR029034">
    <property type="entry name" value="Cystine-knot_cytokine"/>
</dbReference>
<dbReference type="InterPro" id="IPR000476">
    <property type="entry name" value="Glyco_hormone"/>
</dbReference>
<dbReference type="PANTHER" id="PTHR11509">
    <property type="entry name" value="GLYCOPROTEIN HORMONE ALPHA CHAIN"/>
    <property type="match status" value="1"/>
</dbReference>
<dbReference type="PANTHER" id="PTHR11509:SF0">
    <property type="entry name" value="GLYCOPROTEIN HORMONES ALPHA CHAIN"/>
    <property type="match status" value="1"/>
</dbReference>
<dbReference type="Pfam" id="PF00236">
    <property type="entry name" value="Hormone_6"/>
    <property type="match status" value="1"/>
</dbReference>
<dbReference type="PRINTS" id="PR00274">
    <property type="entry name" value="GLYCOHORMONE"/>
</dbReference>
<dbReference type="SMART" id="SM00067">
    <property type="entry name" value="GHA"/>
    <property type="match status" value="1"/>
</dbReference>
<dbReference type="SUPFAM" id="SSF57501">
    <property type="entry name" value="Cystine-knot cytokines"/>
    <property type="match status" value="1"/>
</dbReference>
<dbReference type="PROSITE" id="PS00779">
    <property type="entry name" value="GLYCO_HORMONE_ALPHA_1"/>
    <property type="match status" value="1"/>
</dbReference>
<dbReference type="PROSITE" id="PS00780">
    <property type="entry name" value="GLYCO_HORMONE_ALPHA_2"/>
    <property type="match status" value="1"/>
</dbReference>
<dbReference type="PROSITE" id="PS50277">
    <property type="entry name" value="GLYCO_HORMONE_ALPHA_3"/>
    <property type="match status" value="1"/>
</dbReference>